<proteinExistence type="inferred from homology"/>
<accession>A3Q8T5</accession>
<name>SYGA_SHELP</name>
<sequence>MTTKHDVKTFQGFILTLQEYWAQQGCAIVQPLDMEVGAGTFHPMTFLRSLGPEPMSSAYVQPCRRPTDGRYGENPNRLQHYYQFQVVLKPSPSNIQELYLGSLEALGVDMNIHDVRFVEDNWESPTLGAWGLGWEVWLNGMEVSQFTYFQQVGGLECSPVTGEITYGLERLAMYIQEVDSVYDLVWTDGPMGKIMYGDVFHQNEVEQSTYNFEHANVEVLFKQFDDCEKACNELLALETPLPLPAYEQVMKASHAFNLLDARHAISVTERQRYILRVRTMAKSVAESYYQAREALGFPMCK</sequence>
<feature type="chain" id="PRO_1000047487" description="Glycine--tRNA ligase alpha subunit">
    <location>
        <begin position="1"/>
        <end position="301"/>
    </location>
</feature>
<comment type="catalytic activity">
    <reaction evidence="1">
        <text>tRNA(Gly) + glycine + ATP = glycyl-tRNA(Gly) + AMP + diphosphate</text>
        <dbReference type="Rhea" id="RHEA:16013"/>
        <dbReference type="Rhea" id="RHEA-COMP:9664"/>
        <dbReference type="Rhea" id="RHEA-COMP:9683"/>
        <dbReference type="ChEBI" id="CHEBI:30616"/>
        <dbReference type="ChEBI" id="CHEBI:33019"/>
        <dbReference type="ChEBI" id="CHEBI:57305"/>
        <dbReference type="ChEBI" id="CHEBI:78442"/>
        <dbReference type="ChEBI" id="CHEBI:78522"/>
        <dbReference type="ChEBI" id="CHEBI:456215"/>
        <dbReference type="EC" id="6.1.1.14"/>
    </reaction>
</comment>
<comment type="subunit">
    <text evidence="1">Tetramer of two alpha and two beta subunits.</text>
</comment>
<comment type="subcellular location">
    <subcellularLocation>
        <location evidence="1">Cytoplasm</location>
    </subcellularLocation>
</comment>
<comment type="similarity">
    <text evidence="1">Belongs to the class-II aminoacyl-tRNA synthetase family.</text>
</comment>
<protein>
    <recommendedName>
        <fullName evidence="1">Glycine--tRNA ligase alpha subunit</fullName>
        <ecNumber evidence="1">6.1.1.14</ecNumber>
    </recommendedName>
    <alternativeName>
        <fullName evidence="1">Glycyl-tRNA synthetase alpha subunit</fullName>
        <shortName evidence="1">GlyRS</shortName>
    </alternativeName>
</protein>
<reference key="1">
    <citation type="submission" date="2007-03" db="EMBL/GenBank/DDBJ databases">
        <title>Complete sequence of Shewanella loihica PV-4.</title>
        <authorList>
            <consortium name="US DOE Joint Genome Institute"/>
            <person name="Copeland A."/>
            <person name="Lucas S."/>
            <person name="Lapidus A."/>
            <person name="Barry K."/>
            <person name="Detter J.C."/>
            <person name="Glavina del Rio T."/>
            <person name="Hammon N."/>
            <person name="Israni S."/>
            <person name="Dalin E."/>
            <person name="Tice H."/>
            <person name="Pitluck S."/>
            <person name="Chain P."/>
            <person name="Malfatti S."/>
            <person name="Shin M."/>
            <person name="Vergez L."/>
            <person name="Schmutz J."/>
            <person name="Larimer F."/>
            <person name="Land M."/>
            <person name="Hauser L."/>
            <person name="Kyrpides N."/>
            <person name="Mikhailova N."/>
            <person name="Romine M.F."/>
            <person name="Serres G."/>
            <person name="Fredrickson J."/>
            <person name="Tiedje J."/>
            <person name="Richardson P."/>
        </authorList>
    </citation>
    <scope>NUCLEOTIDE SEQUENCE [LARGE SCALE GENOMIC DNA]</scope>
    <source>
        <strain>ATCC BAA-1088 / PV-4</strain>
    </source>
</reference>
<organism>
    <name type="scientific">Shewanella loihica (strain ATCC BAA-1088 / PV-4)</name>
    <dbReference type="NCBI Taxonomy" id="323850"/>
    <lineage>
        <taxon>Bacteria</taxon>
        <taxon>Pseudomonadati</taxon>
        <taxon>Pseudomonadota</taxon>
        <taxon>Gammaproteobacteria</taxon>
        <taxon>Alteromonadales</taxon>
        <taxon>Shewanellaceae</taxon>
        <taxon>Shewanella</taxon>
    </lineage>
</organism>
<gene>
    <name evidence="1" type="primary">glyQ</name>
    <name type="ordered locus">Shew_0010</name>
</gene>
<evidence type="ECO:0000255" key="1">
    <source>
        <dbReference type="HAMAP-Rule" id="MF_00254"/>
    </source>
</evidence>
<dbReference type="EC" id="6.1.1.14" evidence="1"/>
<dbReference type="EMBL" id="CP000606">
    <property type="protein sequence ID" value="ABO21883.1"/>
    <property type="molecule type" value="Genomic_DNA"/>
</dbReference>
<dbReference type="RefSeq" id="WP_011863820.1">
    <property type="nucleotide sequence ID" value="NC_009092.1"/>
</dbReference>
<dbReference type="SMR" id="A3Q8T5"/>
<dbReference type="STRING" id="323850.Shew_0010"/>
<dbReference type="KEGG" id="slo:Shew_0010"/>
<dbReference type="eggNOG" id="COG0752">
    <property type="taxonomic scope" value="Bacteria"/>
</dbReference>
<dbReference type="HOGENOM" id="CLU_057066_1_0_6"/>
<dbReference type="OrthoDB" id="9802183at2"/>
<dbReference type="Proteomes" id="UP000001558">
    <property type="component" value="Chromosome"/>
</dbReference>
<dbReference type="GO" id="GO:0005829">
    <property type="term" value="C:cytosol"/>
    <property type="evidence" value="ECO:0007669"/>
    <property type="project" value="TreeGrafter"/>
</dbReference>
<dbReference type="GO" id="GO:0005524">
    <property type="term" value="F:ATP binding"/>
    <property type="evidence" value="ECO:0007669"/>
    <property type="project" value="UniProtKB-UniRule"/>
</dbReference>
<dbReference type="GO" id="GO:0004820">
    <property type="term" value="F:glycine-tRNA ligase activity"/>
    <property type="evidence" value="ECO:0007669"/>
    <property type="project" value="UniProtKB-UniRule"/>
</dbReference>
<dbReference type="GO" id="GO:0006426">
    <property type="term" value="P:glycyl-tRNA aminoacylation"/>
    <property type="evidence" value="ECO:0007669"/>
    <property type="project" value="UniProtKB-UniRule"/>
</dbReference>
<dbReference type="CDD" id="cd00733">
    <property type="entry name" value="GlyRS_alpha_core"/>
    <property type="match status" value="1"/>
</dbReference>
<dbReference type="FunFam" id="3.30.930.10:FF:000006">
    <property type="entry name" value="Glycine--tRNA ligase alpha subunit"/>
    <property type="match status" value="1"/>
</dbReference>
<dbReference type="Gene3D" id="3.30.930.10">
    <property type="entry name" value="Bira Bifunctional Protein, Domain 2"/>
    <property type="match status" value="1"/>
</dbReference>
<dbReference type="Gene3D" id="1.20.58.180">
    <property type="entry name" value="Class II aaRS and biotin synthetases, domain 2"/>
    <property type="match status" value="1"/>
</dbReference>
<dbReference type="HAMAP" id="MF_00254">
    <property type="entry name" value="Gly_tRNA_synth_alpha"/>
    <property type="match status" value="1"/>
</dbReference>
<dbReference type="InterPro" id="IPR045864">
    <property type="entry name" value="aa-tRNA-synth_II/BPL/LPL"/>
</dbReference>
<dbReference type="InterPro" id="IPR006194">
    <property type="entry name" value="Gly-tRNA-synth_heterodimer"/>
</dbReference>
<dbReference type="InterPro" id="IPR002310">
    <property type="entry name" value="Gly-tRNA_ligase_asu"/>
</dbReference>
<dbReference type="NCBIfam" id="TIGR00388">
    <property type="entry name" value="glyQ"/>
    <property type="match status" value="1"/>
</dbReference>
<dbReference type="NCBIfam" id="NF006827">
    <property type="entry name" value="PRK09348.1"/>
    <property type="match status" value="1"/>
</dbReference>
<dbReference type="PANTHER" id="PTHR30075:SF2">
    <property type="entry name" value="GLYCINE--TRNA LIGASE, CHLOROPLASTIC_MITOCHONDRIAL 2"/>
    <property type="match status" value="1"/>
</dbReference>
<dbReference type="PANTHER" id="PTHR30075">
    <property type="entry name" value="GLYCYL-TRNA SYNTHETASE"/>
    <property type="match status" value="1"/>
</dbReference>
<dbReference type="Pfam" id="PF02091">
    <property type="entry name" value="tRNA-synt_2e"/>
    <property type="match status" value="1"/>
</dbReference>
<dbReference type="PRINTS" id="PR01044">
    <property type="entry name" value="TRNASYNTHGA"/>
</dbReference>
<dbReference type="SUPFAM" id="SSF55681">
    <property type="entry name" value="Class II aaRS and biotin synthetases"/>
    <property type="match status" value="1"/>
</dbReference>
<dbReference type="PROSITE" id="PS50861">
    <property type="entry name" value="AA_TRNA_LIGASE_II_GLYAB"/>
    <property type="match status" value="1"/>
</dbReference>
<keyword id="KW-0030">Aminoacyl-tRNA synthetase</keyword>
<keyword id="KW-0067">ATP-binding</keyword>
<keyword id="KW-0963">Cytoplasm</keyword>
<keyword id="KW-0436">Ligase</keyword>
<keyword id="KW-0547">Nucleotide-binding</keyword>
<keyword id="KW-0648">Protein biosynthesis</keyword>
<keyword id="KW-1185">Reference proteome</keyword>